<protein>
    <recommendedName>
        <fullName evidence="1">Large ribosomal subunit protein uL6</fullName>
    </recommendedName>
    <alternativeName>
        <fullName evidence="2">50S ribosomal protein L6</fullName>
    </alternativeName>
</protein>
<accession>C5C0H6</accession>
<name>RL6_BEUC1</name>
<feature type="chain" id="PRO_1000214918" description="Large ribosomal subunit protein uL6">
    <location>
        <begin position="1"/>
        <end position="179"/>
    </location>
</feature>
<organism>
    <name type="scientific">Beutenbergia cavernae (strain ATCC BAA-8 / DSM 12333 / CCUG 43141 / JCM 11478 / NBRC 16432 / NCIMB 13614 / HKI 0122)</name>
    <dbReference type="NCBI Taxonomy" id="471853"/>
    <lineage>
        <taxon>Bacteria</taxon>
        <taxon>Bacillati</taxon>
        <taxon>Actinomycetota</taxon>
        <taxon>Actinomycetes</taxon>
        <taxon>Micrococcales</taxon>
        <taxon>Beutenbergiaceae</taxon>
        <taxon>Beutenbergia</taxon>
    </lineage>
</organism>
<reference key="1">
    <citation type="journal article" date="2009" name="Stand. Genomic Sci.">
        <title>Complete genome sequence of Beutenbergia cavernae type strain (HKI 0122).</title>
        <authorList>
            <person name="Land M."/>
            <person name="Pukall R."/>
            <person name="Abt B."/>
            <person name="Goker M."/>
            <person name="Rohde M."/>
            <person name="Glavina Del Rio T."/>
            <person name="Tice H."/>
            <person name="Copeland A."/>
            <person name="Cheng J.F."/>
            <person name="Lucas S."/>
            <person name="Chen F."/>
            <person name="Nolan M."/>
            <person name="Bruce D."/>
            <person name="Goodwin L."/>
            <person name="Pitluck S."/>
            <person name="Ivanova N."/>
            <person name="Mavromatis K."/>
            <person name="Ovchinnikova G."/>
            <person name="Pati A."/>
            <person name="Chen A."/>
            <person name="Palaniappan K."/>
            <person name="Hauser L."/>
            <person name="Chang Y.J."/>
            <person name="Jefferies C.C."/>
            <person name="Saunders E."/>
            <person name="Brettin T."/>
            <person name="Detter J.C."/>
            <person name="Han C."/>
            <person name="Chain P."/>
            <person name="Bristow J."/>
            <person name="Eisen J.A."/>
            <person name="Markowitz V."/>
            <person name="Hugenholtz P."/>
            <person name="Kyrpides N.C."/>
            <person name="Klenk H.P."/>
            <person name="Lapidus A."/>
        </authorList>
    </citation>
    <scope>NUCLEOTIDE SEQUENCE [LARGE SCALE GENOMIC DNA]</scope>
    <source>
        <strain>ATCC BAA-8 / DSM 12333 / CCUG 43141 / JCM 11478 / NBRC 16432 / NCIMB 13614 / HKI 0122</strain>
    </source>
</reference>
<keyword id="KW-1185">Reference proteome</keyword>
<keyword id="KW-0687">Ribonucleoprotein</keyword>
<keyword id="KW-0689">Ribosomal protein</keyword>
<keyword id="KW-0694">RNA-binding</keyword>
<keyword id="KW-0699">rRNA-binding</keyword>
<dbReference type="EMBL" id="CP001618">
    <property type="protein sequence ID" value="ACQ81372.1"/>
    <property type="molecule type" value="Genomic_DNA"/>
</dbReference>
<dbReference type="RefSeq" id="WP_015883612.1">
    <property type="nucleotide sequence ID" value="NC_012669.1"/>
</dbReference>
<dbReference type="SMR" id="C5C0H6"/>
<dbReference type="STRING" id="471853.Bcav_3128"/>
<dbReference type="KEGG" id="bcv:Bcav_3128"/>
<dbReference type="eggNOG" id="COG0097">
    <property type="taxonomic scope" value="Bacteria"/>
</dbReference>
<dbReference type="HOGENOM" id="CLU_065464_1_2_11"/>
<dbReference type="OrthoDB" id="9805007at2"/>
<dbReference type="Proteomes" id="UP000007962">
    <property type="component" value="Chromosome"/>
</dbReference>
<dbReference type="GO" id="GO:0022625">
    <property type="term" value="C:cytosolic large ribosomal subunit"/>
    <property type="evidence" value="ECO:0007669"/>
    <property type="project" value="TreeGrafter"/>
</dbReference>
<dbReference type="GO" id="GO:0019843">
    <property type="term" value="F:rRNA binding"/>
    <property type="evidence" value="ECO:0007669"/>
    <property type="project" value="UniProtKB-UniRule"/>
</dbReference>
<dbReference type="GO" id="GO:0003735">
    <property type="term" value="F:structural constituent of ribosome"/>
    <property type="evidence" value="ECO:0007669"/>
    <property type="project" value="InterPro"/>
</dbReference>
<dbReference type="GO" id="GO:0002181">
    <property type="term" value="P:cytoplasmic translation"/>
    <property type="evidence" value="ECO:0007669"/>
    <property type="project" value="TreeGrafter"/>
</dbReference>
<dbReference type="FunFam" id="3.90.930.12:FF:000001">
    <property type="entry name" value="50S ribosomal protein L6"/>
    <property type="match status" value="1"/>
</dbReference>
<dbReference type="FunFam" id="3.90.930.12:FF:000002">
    <property type="entry name" value="50S ribosomal protein L6"/>
    <property type="match status" value="1"/>
</dbReference>
<dbReference type="Gene3D" id="3.90.930.12">
    <property type="entry name" value="Ribosomal protein L6, alpha-beta domain"/>
    <property type="match status" value="2"/>
</dbReference>
<dbReference type="HAMAP" id="MF_01365_B">
    <property type="entry name" value="Ribosomal_uL6_B"/>
    <property type="match status" value="1"/>
</dbReference>
<dbReference type="InterPro" id="IPR000702">
    <property type="entry name" value="Ribosomal_uL6-like"/>
</dbReference>
<dbReference type="InterPro" id="IPR036789">
    <property type="entry name" value="Ribosomal_uL6-like_a/b-dom_sf"/>
</dbReference>
<dbReference type="InterPro" id="IPR020040">
    <property type="entry name" value="Ribosomal_uL6_a/b-dom"/>
</dbReference>
<dbReference type="InterPro" id="IPR019906">
    <property type="entry name" value="Ribosomal_uL6_bac-type"/>
</dbReference>
<dbReference type="InterPro" id="IPR002358">
    <property type="entry name" value="Ribosomal_uL6_CS"/>
</dbReference>
<dbReference type="NCBIfam" id="TIGR03654">
    <property type="entry name" value="L6_bact"/>
    <property type="match status" value="1"/>
</dbReference>
<dbReference type="PANTHER" id="PTHR11655">
    <property type="entry name" value="60S/50S RIBOSOMAL PROTEIN L6/L9"/>
    <property type="match status" value="1"/>
</dbReference>
<dbReference type="PANTHER" id="PTHR11655:SF14">
    <property type="entry name" value="LARGE RIBOSOMAL SUBUNIT PROTEIN UL6M"/>
    <property type="match status" value="1"/>
</dbReference>
<dbReference type="Pfam" id="PF00347">
    <property type="entry name" value="Ribosomal_L6"/>
    <property type="match status" value="2"/>
</dbReference>
<dbReference type="PIRSF" id="PIRSF002162">
    <property type="entry name" value="Ribosomal_L6"/>
    <property type="match status" value="1"/>
</dbReference>
<dbReference type="PRINTS" id="PR00059">
    <property type="entry name" value="RIBOSOMALL6"/>
</dbReference>
<dbReference type="SUPFAM" id="SSF56053">
    <property type="entry name" value="Ribosomal protein L6"/>
    <property type="match status" value="2"/>
</dbReference>
<dbReference type="PROSITE" id="PS00525">
    <property type="entry name" value="RIBOSOMAL_L6_1"/>
    <property type="match status" value="1"/>
</dbReference>
<gene>
    <name evidence="1" type="primary">rplF</name>
    <name type="ordered locus">Bcav_3128</name>
</gene>
<evidence type="ECO:0000255" key="1">
    <source>
        <dbReference type="HAMAP-Rule" id="MF_01365"/>
    </source>
</evidence>
<evidence type="ECO:0000305" key="2"/>
<comment type="function">
    <text evidence="1">This protein binds to the 23S rRNA, and is important in its secondary structure. It is located near the subunit interface in the base of the L7/L12 stalk, and near the tRNA binding site of the peptidyltransferase center.</text>
</comment>
<comment type="subunit">
    <text evidence="1">Part of the 50S ribosomal subunit.</text>
</comment>
<comment type="similarity">
    <text evidence="1">Belongs to the universal ribosomal protein uL6 family.</text>
</comment>
<proteinExistence type="inferred from homology"/>
<sequence length="179" mass="19024">MSRIGKIPVQVPSGVDVDIADRVVTVKGPKGTLTHRVPAPIVVARGDDGALVVTRPDDERTSRSLHGLTRTLLANLVTGVTQGYQKNLEIVGTGYRVTAKGSSLEFALGFSHPVTVSAPEGITFAVESPTKFSVAGIDKQQVGEVAANIRKIRKPEPYKGKGVRYAGEQVRRKVGKAGK</sequence>